<dbReference type="EMBL" id="CP000259">
    <property type="protein sequence ID" value="ABF31257.1"/>
    <property type="molecule type" value="Genomic_DNA"/>
</dbReference>
<dbReference type="RefSeq" id="WP_001118387.1">
    <property type="nucleotide sequence ID" value="NC_008021.1"/>
</dbReference>
<dbReference type="SMR" id="Q1JNZ2"/>
<dbReference type="GeneID" id="93825319"/>
<dbReference type="KEGG" id="spk:MGAS9429_Spy0069"/>
<dbReference type="HOGENOM" id="CLU_072439_5_0_9"/>
<dbReference type="Proteomes" id="UP000002433">
    <property type="component" value="Chromosome"/>
</dbReference>
<dbReference type="GO" id="GO:1990904">
    <property type="term" value="C:ribonucleoprotein complex"/>
    <property type="evidence" value="ECO:0007669"/>
    <property type="project" value="UniProtKB-KW"/>
</dbReference>
<dbReference type="GO" id="GO:0005840">
    <property type="term" value="C:ribosome"/>
    <property type="evidence" value="ECO:0007669"/>
    <property type="project" value="UniProtKB-KW"/>
</dbReference>
<dbReference type="GO" id="GO:0019843">
    <property type="term" value="F:rRNA binding"/>
    <property type="evidence" value="ECO:0007669"/>
    <property type="project" value="UniProtKB-UniRule"/>
</dbReference>
<dbReference type="GO" id="GO:0003735">
    <property type="term" value="F:structural constituent of ribosome"/>
    <property type="evidence" value="ECO:0007669"/>
    <property type="project" value="InterPro"/>
</dbReference>
<dbReference type="GO" id="GO:0006412">
    <property type="term" value="P:translation"/>
    <property type="evidence" value="ECO:0007669"/>
    <property type="project" value="UniProtKB-UniRule"/>
</dbReference>
<dbReference type="FunFam" id="3.30.420.80:FF:000001">
    <property type="entry name" value="30S ribosomal protein S11"/>
    <property type="match status" value="1"/>
</dbReference>
<dbReference type="Gene3D" id="3.30.420.80">
    <property type="entry name" value="Ribosomal protein S11"/>
    <property type="match status" value="1"/>
</dbReference>
<dbReference type="HAMAP" id="MF_01310">
    <property type="entry name" value="Ribosomal_uS11"/>
    <property type="match status" value="1"/>
</dbReference>
<dbReference type="InterPro" id="IPR001971">
    <property type="entry name" value="Ribosomal_uS11"/>
</dbReference>
<dbReference type="InterPro" id="IPR019981">
    <property type="entry name" value="Ribosomal_uS11_bac-type"/>
</dbReference>
<dbReference type="InterPro" id="IPR018102">
    <property type="entry name" value="Ribosomal_uS11_CS"/>
</dbReference>
<dbReference type="InterPro" id="IPR036967">
    <property type="entry name" value="Ribosomal_uS11_sf"/>
</dbReference>
<dbReference type="NCBIfam" id="NF003698">
    <property type="entry name" value="PRK05309.1"/>
    <property type="match status" value="1"/>
</dbReference>
<dbReference type="NCBIfam" id="TIGR03632">
    <property type="entry name" value="uS11_bact"/>
    <property type="match status" value="1"/>
</dbReference>
<dbReference type="PANTHER" id="PTHR11759">
    <property type="entry name" value="40S RIBOSOMAL PROTEIN S14/30S RIBOSOMAL PROTEIN S11"/>
    <property type="match status" value="1"/>
</dbReference>
<dbReference type="Pfam" id="PF00411">
    <property type="entry name" value="Ribosomal_S11"/>
    <property type="match status" value="1"/>
</dbReference>
<dbReference type="PIRSF" id="PIRSF002131">
    <property type="entry name" value="Ribosomal_S11"/>
    <property type="match status" value="1"/>
</dbReference>
<dbReference type="SUPFAM" id="SSF53137">
    <property type="entry name" value="Translational machinery components"/>
    <property type="match status" value="1"/>
</dbReference>
<dbReference type="PROSITE" id="PS00054">
    <property type="entry name" value="RIBOSOMAL_S11"/>
    <property type="match status" value="1"/>
</dbReference>
<name>RS11_STRPC</name>
<protein>
    <recommendedName>
        <fullName evidence="1">Small ribosomal subunit protein uS11</fullName>
    </recommendedName>
    <alternativeName>
        <fullName evidence="2">30S ribosomal protein S11</fullName>
    </alternativeName>
</protein>
<keyword id="KW-0687">Ribonucleoprotein</keyword>
<keyword id="KW-0689">Ribosomal protein</keyword>
<keyword id="KW-0694">RNA-binding</keyword>
<keyword id="KW-0699">rRNA-binding</keyword>
<organism>
    <name type="scientific">Streptococcus pyogenes serotype M12 (strain MGAS9429)</name>
    <dbReference type="NCBI Taxonomy" id="370551"/>
    <lineage>
        <taxon>Bacteria</taxon>
        <taxon>Bacillati</taxon>
        <taxon>Bacillota</taxon>
        <taxon>Bacilli</taxon>
        <taxon>Lactobacillales</taxon>
        <taxon>Streptococcaceae</taxon>
        <taxon>Streptococcus</taxon>
    </lineage>
</organism>
<feature type="chain" id="PRO_0000294865" description="Small ribosomal subunit protein uS11">
    <location>
        <begin position="1"/>
        <end position="127"/>
    </location>
</feature>
<evidence type="ECO:0000255" key="1">
    <source>
        <dbReference type="HAMAP-Rule" id="MF_01310"/>
    </source>
</evidence>
<evidence type="ECO:0000305" key="2"/>
<proteinExistence type="inferred from homology"/>
<gene>
    <name evidence="1" type="primary">rpsK</name>
    <name type="ordered locus">MGAS9429_Spy0069</name>
</gene>
<reference key="1">
    <citation type="journal article" date="2006" name="Proc. Natl. Acad. Sci. U.S.A.">
        <title>Molecular genetic anatomy of inter- and intraserotype variation in the human bacterial pathogen group A Streptococcus.</title>
        <authorList>
            <person name="Beres S.B."/>
            <person name="Richter E.W."/>
            <person name="Nagiec M.J."/>
            <person name="Sumby P."/>
            <person name="Porcella S.F."/>
            <person name="DeLeo F.R."/>
            <person name="Musser J.M."/>
        </authorList>
    </citation>
    <scope>NUCLEOTIDE SEQUENCE [LARGE SCALE GENOMIC DNA]</scope>
    <source>
        <strain>MGAS9429</strain>
    </source>
</reference>
<sequence length="127" mass="13369">MAKPTRKRRVKKNIESGVAHIHATFNNTIVMITDVHGNALAWSSAGALGFKGSRKSTPFAAQMAAEAAAKSAQEHGLKTVEVTVKGPGSGRESAIRALAAAGLEVTAIRDVTPVPHNGARPPKRRRV</sequence>
<accession>Q1JNZ2</accession>
<comment type="function">
    <text evidence="1">Located on the platform of the 30S subunit, it bridges several disparate RNA helices of the 16S rRNA. Forms part of the Shine-Dalgarno cleft in the 70S ribosome.</text>
</comment>
<comment type="subunit">
    <text evidence="1">Part of the 30S ribosomal subunit. Interacts with proteins S7 and S18. Binds to IF-3.</text>
</comment>
<comment type="similarity">
    <text evidence="1">Belongs to the universal ribosomal protein uS11 family.</text>
</comment>